<keyword id="KW-0539">Nucleus</keyword>
<keyword id="KW-1185">Reference proteome</keyword>
<keyword id="KW-0687">Ribonucleoprotein</keyword>
<keyword id="KW-0690">Ribosome biogenesis</keyword>
<keyword id="KW-0698">rRNA processing</keyword>
<feature type="chain" id="PRO_0000408126" description="U3 small nucleolar RNA-associated protein 25">
    <location>
        <begin position="1"/>
        <end position="732"/>
    </location>
</feature>
<feature type="region of interest" description="Disordered" evidence="2">
    <location>
        <begin position="1"/>
        <end position="172"/>
    </location>
</feature>
<feature type="compositionally biased region" description="Basic residues" evidence="2">
    <location>
        <begin position="18"/>
        <end position="30"/>
    </location>
</feature>
<feature type="compositionally biased region" description="Acidic residues" evidence="2">
    <location>
        <begin position="59"/>
        <end position="69"/>
    </location>
</feature>
<feature type="compositionally biased region" description="Basic and acidic residues" evidence="2">
    <location>
        <begin position="113"/>
        <end position="127"/>
    </location>
</feature>
<feature type="compositionally biased region" description="Acidic residues" evidence="2">
    <location>
        <begin position="138"/>
        <end position="154"/>
    </location>
</feature>
<evidence type="ECO:0000250" key="1"/>
<evidence type="ECO:0000256" key="2">
    <source>
        <dbReference type="SAM" id="MobiDB-lite"/>
    </source>
</evidence>
<evidence type="ECO:0000305" key="3"/>
<organism>
    <name type="scientific">Paracoccidioides lutzii (strain ATCC MYA-826 / Pb01)</name>
    <name type="common">Paracoccidioides brasiliensis</name>
    <dbReference type="NCBI Taxonomy" id="502779"/>
    <lineage>
        <taxon>Eukaryota</taxon>
        <taxon>Fungi</taxon>
        <taxon>Dikarya</taxon>
        <taxon>Ascomycota</taxon>
        <taxon>Pezizomycotina</taxon>
        <taxon>Eurotiomycetes</taxon>
        <taxon>Eurotiomycetidae</taxon>
        <taxon>Onygenales</taxon>
        <taxon>Ajellomycetaceae</taxon>
        <taxon>Paracoccidioides</taxon>
    </lineage>
</organism>
<gene>
    <name type="primary">UTP25</name>
    <name type="ORF">PAAG_00375</name>
</gene>
<sequence>MAAGRGRGGSRPFSVRGGRGRGQKGGRGSRRPTFEASRVAEAHHEDSSEDGSVHLGSDLDAEDQLEAPDESSSSSSDDEEDENRTEKPYNTLLQLLNTGQGVGGPARKRRKMDHNSKKVDVEVKGSDESDAEGLLLESEGEESSEGEEMEDMPMDEVRTENSGDENDASDPFEIHFSNVDSTLLSQKIKAISSKGWQSHKSELPGKLRLMASQPNTEGHIIQVLPATQGVDNLKLKQKLAKHAGDHISKLDSLASSLVPYIFGYQDLLFGARTLSNSATFRDLYCLHVLNHILKTRDRVLKNNSRLQKEPESDLELRDQGFTRPKVLIILPTRQACVRVMESITKLYQAEQQENKARFYETFSAADDKSWEHKPDDFRELFGGNDDDMFRLGLKFTRKTIKYFSQFYNSDIILASPLGLRMVMDKEDGEKQDFDFLSSIEIAIVDQADALLMQNWEHTEYVFSHLNLQPKESHGCDFSRVRNWYLDDQAKYVRQTLTFSSFITPEINALFSSRMQNTAGKIKATPTYEGAILDIPLPVPVKQTFSRFNSSSPVKDPENRFKYFTSTVLSSLIRSFTGRGGTPRASGTLIFIPSYLDFVRIRNYLATSSQTEHLSFGAISEYTSVRDVARARTHFFSGRHSVLLYTERTHHFRRYQIRGVKRIIMYGVPENPVFWGEVVGFLGLDPAGAAEAAEGGVRALFSKWDALKMERIVGTKRLGNMLMEKGGDTFSFV</sequence>
<accession>C1GPD0</accession>
<protein>
    <recommendedName>
        <fullName>U3 small nucleolar RNA-associated protein 25</fullName>
        <shortName>U3 snoRNA-associated protein 25</shortName>
    </recommendedName>
    <alternativeName>
        <fullName>U three protein 25</fullName>
    </alternativeName>
</protein>
<reference key="1">
    <citation type="journal article" date="2011" name="PLoS Genet.">
        <title>Comparative genomic analysis of human fungal pathogens causing paracoccidioidomycosis.</title>
        <authorList>
            <person name="Desjardins C.A."/>
            <person name="Champion M.D."/>
            <person name="Holder J.W."/>
            <person name="Muszewska A."/>
            <person name="Goldberg J."/>
            <person name="Bailao A.M."/>
            <person name="Brigido M.M."/>
            <person name="Ferreira M.E."/>
            <person name="Garcia A.M."/>
            <person name="Grynberg M."/>
            <person name="Gujja S."/>
            <person name="Heiman D.I."/>
            <person name="Henn M.R."/>
            <person name="Kodira C.D."/>
            <person name="Leon-Narvaez H."/>
            <person name="Longo L.V.G."/>
            <person name="Ma L.-J."/>
            <person name="Malavazi I."/>
            <person name="Matsuo A.L."/>
            <person name="Morais F.V."/>
            <person name="Pereira M."/>
            <person name="Rodriguez-Brito S."/>
            <person name="Sakthikumar S."/>
            <person name="Salem-Izacc S.M."/>
            <person name="Sykes S.M."/>
            <person name="Teixeira M.M."/>
            <person name="Vallejo M.C."/>
            <person name="Walter M.E."/>
            <person name="Yandava C."/>
            <person name="Young S."/>
            <person name="Zeng Q."/>
            <person name="Zucker J."/>
            <person name="Felipe M.S."/>
            <person name="Goldman G.H."/>
            <person name="Haas B.J."/>
            <person name="McEwen J.G."/>
            <person name="Nino-Vega G."/>
            <person name="Puccia R."/>
            <person name="San-Blas G."/>
            <person name="Soares C.M."/>
            <person name="Birren B.W."/>
            <person name="Cuomo C.A."/>
        </authorList>
    </citation>
    <scope>NUCLEOTIDE SEQUENCE [LARGE SCALE GENOMIC DNA]</scope>
    <source>
        <strain>ATCC MYA-826 / Pb01</strain>
    </source>
</reference>
<name>UTP25_PARBA</name>
<dbReference type="EMBL" id="KN293992">
    <property type="protein sequence ID" value="EEH36052.2"/>
    <property type="molecule type" value="Genomic_DNA"/>
</dbReference>
<dbReference type="RefSeq" id="XP_015700331.1">
    <property type="nucleotide sequence ID" value="XM_015843996.1"/>
</dbReference>
<dbReference type="STRING" id="502779.C1GPD0"/>
<dbReference type="GeneID" id="9100923"/>
<dbReference type="KEGG" id="pbl:PAAG_00375"/>
<dbReference type="VEuPathDB" id="FungiDB:PAAG_00375"/>
<dbReference type="eggNOG" id="KOG2340">
    <property type="taxonomic scope" value="Eukaryota"/>
</dbReference>
<dbReference type="HOGENOM" id="CLU_018705_0_1_1"/>
<dbReference type="OMA" id="QDRGDTF"/>
<dbReference type="OrthoDB" id="10264378at2759"/>
<dbReference type="Proteomes" id="UP000002059">
    <property type="component" value="Partially assembled WGS sequence"/>
</dbReference>
<dbReference type="GO" id="GO:0005730">
    <property type="term" value="C:nucleolus"/>
    <property type="evidence" value="ECO:0007669"/>
    <property type="project" value="UniProtKB-SubCell"/>
</dbReference>
<dbReference type="GO" id="GO:0032040">
    <property type="term" value="C:small-subunit processome"/>
    <property type="evidence" value="ECO:0007669"/>
    <property type="project" value="TreeGrafter"/>
</dbReference>
<dbReference type="GO" id="GO:0019843">
    <property type="term" value="F:rRNA binding"/>
    <property type="evidence" value="ECO:0007669"/>
    <property type="project" value="TreeGrafter"/>
</dbReference>
<dbReference type="GO" id="GO:0034511">
    <property type="term" value="F:U3 snoRNA binding"/>
    <property type="evidence" value="ECO:0007669"/>
    <property type="project" value="InterPro"/>
</dbReference>
<dbReference type="GO" id="GO:0000462">
    <property type="term" value="P:maturation of SSU-rRNA from tricistronic rRNA transcript (SSU-rRNA, 5.8S rRNA, LSU-rRNA)"/>
    <property type="evidence" value="ECO:0007669"/>
    <property type="project" value="TreeGrafter"/>
</dbReference>
<dbReference type="FunFam" id="3.40.50.300:FF:002356">
    <property type="entry name" value="U3 small nucleolar RNA-associated protein 25"/>
    <property type="match status" value="1"/>
</dbReference>
<dbReference type="Gene3D" id="3.40.50.300">
    <property type="entry name" value="P-loop containing nucleotide triphosphate hydrolases"/>
    <property type="match status" value="1"/>
</dbReference>
<dbReference type="InterPro" id="IPR027417">
    <property type="entry name" value="P-loop_NTPase"/>
</dbReference>
<dbReference type="InterPro" id="IPR010678">
    <property type="entry name" value="UTP25"/>
</dbReference>
<dbReference type="InterPro" id="IPR053939">
    <property type="entry name" value="UTP25_C"/>
</dbReference>
<dbReference type="InterPro" id="IPR053940">
    <property type="entry name" value="UTP25_NTPase-like"/>
</dbReference>
<dbReference type="PANTHER" id="PTHR12933">
    <property type="entry name" value="ORF PROTEIN-RELATED"/>
    <property type="match status" value="1"/>
</dbReference>
<dbReference type="PANTHER" id="PTHR12933:SF0">
    <property type="entry name" value="U3 SMALL NUCLEOLAR RNA-ASSOCIATED PROTEIN 25 HOMOLOG"/>
    <property type="match status" value="1"/>
</dbReference>
<dbReference type="Pfam" id="PF06862">
    <property type="entry name" value="Utp25_C"/>
    <property type="match status" value="1"/>
</dbReference>
<dbReference type="Pfam" id="PF22916">
    <property type="entry name" value="UTP25_NTPase-like"/>
    <property type="match status" value="1"/>
</dbReference>
<comment type="function">
    <text evidence="1">DEAD-box RNA helicase-like protein required for pre-18S rRNA processing, specifically at sites A0, A1, and A2.</text>
</comment>
<comment type="subunit">
    <text evidence="1">Component of the ribosomal small subunit (SSU) processome composed of at least 40 protein subunits and snoRNA U3.</text>
</comment>
<comment type="subcellular location">
    <subcellularLocation>
        <location evidence="1">Nucleus</location>
        <location evidence="1">Nucleolus</location>
    </subcellularLocation>
</comment>
<comment type="similarity">
    <text evidence="3">Belongs to the UTP25 family.</text>
</comment>
<proteinExistence type="inferred from homology"/>